<name>SP5G_BORBZ</name>
<protein>
    <recommendedName>
        <fullName evidence="1">Putative septation protein SpoVG</fullName>
    </recommendedName>
</protein>
<accession>B7J0N1</accession>
<gene>
    <name evidence="1" type="primary">spoVG</name>
    <name type="ordered locus">BbuZS7_0814</name>
</gene>
<sequence>MDITDIRIKKVDSKNSGSKLLAYVAVTFDNCLVLHNIRVIKGQKGVFIAMPNRRTRVGEYKDIVHPISQDFRKALQTSIFKEYIRENPADLELELDF</sequence>
<keyword id="KW-0131">Cell cycle</keyword>
<keyword id="KW-0132">Cell division</keyword>
<keyword id="KW-0717">Septation</keyword>
<reference key="1">
    <citation type="journal article" date="2011" name="J. Bacteriol.">
        <title>Whole-genome sequences of thirteen isolates of Borrelia burgdorferi.</title>
        <authorList>
            <person name="Schutzer S.E."/>
            <person name="Fraser-Liggett C.M."/>
            <person name="Casjens S.R."/>
            <person name="Qiu W.G."/>
            <person name="Dunn J.J."/>
            <person name="Mongodin E.F."/>
            <person name="Luft B.J."/>
        </authorList>
    </citation>
    <scope>NUCLEOTIDE SEQUENCE [LARGE SCALE GENOMIC DNA]</scope>
    <source>
        <strain>ZS7</strain>
    </source>
</reference>
<proteinExistence type="inferred from homology"/>
<evidence type="ECO:0000255" key="1">
    <source>
        <dbReference type="HAMAP-Rule" id="MF_00819"/>
    </source>
</evidence>
<feature type="chain" id="PRO_1000196492" description="Putative septation protein SpoVG">
    <location>
        <begin position="1"/>
        <end position="97"/>
    </location>
</feature>
<organism>
    <name type="scientific">Borreliella burgdorferi (strain ZS7)</name>
    <name type="common">Borrelia burgdorferi</name>
    <dbReference type="NCBI Taxonomy" id="445985"/>
    <lineage>
        <taxon>Bacteria</taxon>
        <taxon>Pseudomonadati</taxon>
        <taxon>Spirochaetota</taxon>
        <taxon>Spirochaetia</taxon>
        <taxon>Spirochaetales</taxon>
        <taxon>Borreliaceae</taxon>
        <taxon>Borreliella</taxon>
    </lineage>
</organism>
<dbReference type="EMBL" id="CP001205">
    <property type="protein sequence ID" value="ACK74474.1"/>
    <property type="molecule type" value="Genomic_DNA"/>
</dbReference>
<dbReference type="RefSeq" id="WP_002557374.1">
    <property type="nucleotide sequence ID" value="NC_011728.1"/>
</dbReference>
<dbReference type="SMR" id="B7J0N1"/>
<dbReference type="KEGG" id="bbz:BbuZS7_0814"/>
<dbReference type="HOGENOM" id="CLU_103669_2_1_12"/>
<dbReference type="Proteomes" id="UP000006901">
    <property type="component" value="Chromosome"/>
</dbReference>
<dbReference type="GO" id="GO:0000917">
    <property type="term" value="P:division septum assembly"/>
    <property type="evidence" value="ECO:0007669"/>
    <property type="project" value="UniProtKB-KW"/>
</dbReference>
<dbReference type="GO" id="GO:0030435">
    <property type="term" value="P:sporulation resulting in formation of a cellular spore"/>
    <property type="evidence" value="ECO:0007669"/>
    <property type="project" value="InterPro"/>
</dbReference>
<dbReference type="Gene3D" id="3.30.1120.40">
    <property type="entry name" value="Stage V sporulation protein G"/>
    <property type="match status" value="1"/>
</dbReference>
<dbReference type="HAMAP" id="MF_00819">
    <property type="entry name" value="SpoVG"/>
    <property type="match status" value="1"/>
</dbReference>
<dbReference type="InterPro" id="IPR007170">
    <property type="entry name" value="SpoVG"/>
</dbReference>
<dbReference type="InterPro" id="IPR036751">
    <property type="entry name" value="SpoVG_sf"/>
</dbReference>
<dbReference type="NCBIfam" id="NF009749">
    <property type="entry name" value="PRK13259.1"/>
    <property type="match status" value="1"/>
</dbReference>
<dbReference type="PANTHER" id="PTHR38429">
    <property type="entry name" value="SEPTATION PROTEIN SPOVG-RELATED"/>
    <property type="match status" value="1"/>
</dbReference>
<dbReference type="PANTHER" id="PTHR38429:SF1">
    <property type="entry name" value="SEPTATION PROTEIN SPOVG-RELATED"/>
    <property type="match status" value="1"/>
</dbReference>
<dbReference type="Pfam" id="PF04026">
    <property type="entry name" value="SpoVG"/>
    <property type="match status" value="1"/>
</dbReference>
<dbReference type="SUPFAM" id="SSF160537">
    <property type="entry name" value="SpoVG-like"/>
    <property type="match status" value="1"/>
</dbReference>
<comment type="function">
    <text evidence="1">Could be involved in septation.</text>
</comment>
<comment type="similarity">
    <text evidence="1">Belongs to the SpoVG family.</text>
</comment>